<proteinExistence type="inferred from homology"/>
<reference key="1">
    <citation type="journal article" date="2004" name="Nat. Biotechnol.">
        <title>Complete sequence and comparative genome analysis of the dairy bacterium Streptococcus thermophilus.</title>
        <authorList>
            <person name="Bolotin A."/>
            <person name="Quinquis B."/>
            <person name="Renault P."/>
            <person name="Sorokin A."/>
            <person name="Ehrlich S.D."/>
            <person name="Kulakauskas S."/>
            <person name="Lapidus A."/>
            <person name="Goltsman E."/>
            <person name="Mazur M."/>
            <person name="Pusch G.D."/>
            <person name="Fonstein M."/>
            <person name="Overbeek R."/>
            <person name="Kyprides N."/>
            <person name="Purnelle B."/>
            <person name="Prozzi D."/>
            <person name="Ngui K."/>
            <person name="Masuy D."/>
            <person name="Hancy F."/>
            <person name="Burteau S."/>
            <person name="Boutry M."/>
            <person name="Delcour J."/>
            <person name="Goffeau A."/>
            <person name="Hols P."/>
        </authorList>
    </citation>
    <scope>NUCLEOTIDE SEQUENCE [LARGE SCALE GENOMIC DNA]</scope>
    <source>
        <strain>ATCC BAA-250 / LMG 18311</strain>
    </source>
</reference>
<sequence length="293" mass="31867">MISGIINLKKEAGMTSHDAVFKLRKILHEKKIGHGGTLDPDVTGVLPIAVGKATRVIEYMTEAGKVYEGEITIGFSTTTEDASGEVVQTTPITELDGATVDQAMASFEGEITQIPPMYSAVKINGKKLYEYARAGEEVERPQRQVKITEFVRTSPIELENGTARFTFRVACSKGTYVRTLSVDLGVKLGFASHMSALRRTASAGLTLDSSLSLSQISEMVEAGDQSFLLPIEFGVQDLPAVQVTEDDAKEISFGRFISINSQEPLVAAFLGDKVLAIMEKRGQVYKPRKVLSQ</sequence>
<dbReference type="EC" id="5.4.99.25" evidence="1"/>
<dbReference type="EMBL" id="CP000023">
    <property type="protein sequence ID" value="AAV60655.1"/>
    <property type="molecule type" value="Genomic_DNA"/>
</dbReference>
<dbReference type="RefSeq" id="WP_004197018.1">
    <property type="nucleotide sequence ID" value="NC_006448.1"/>
</dbReference>
<dbReference type="SMR" id="Q5M4G2"/>
<dbReference type="STRING" id="264199.stu0995"/>
<dbReference type="GeneID" id="66898841"/>
<dbReference type="KEGG" id="stl:stu0995"/>
<dbReference type="eggNOG" id="COG0130">
    <property type="taxonomic scope" value="Bacteria"/>
</dbReference>
<dbReference type="HOGENOM" id="CLU_032087_0_1_9"/>
<dbReference type="Proteomes" id="UP000001170">
    <property type="component" value="Chromosome"/>
</dbReference>
<dbReference type="GO" id="GO:0003723">
    <property type="term" value="F:RNA binding"/>
    <property type="evidence" value="ECO:0007669"/>
    <property type="project" value="InterPro"/>
</dbReference>
<dbReference type="GO" id="GO:0160148">
    <property type="term" value="F:tRNA pseudouridine(55) synthase activity"/>
    <property type="evidence" value="ECO:0007669"/>
    <property type="project" value="UniProtKB-EC"/>
</dbReference>
<dbReference type="GO" id="GO:1990481">
    <property type="term" value="P:mRNA pseudouridine synthesis"/>
    <property type="evidence" value="ECO:0007669"/>
    <property type="project" value="TreeGrafter"/>
</dbReference>
<dbReference type="GO" id="GO:0031119">
    <property type="term" value="P:tRNA pseudouridine synthesis"/>
    <property type="evidence" value="ECO:0007669"/>
    <property type="project" value="UniProtKB-UniRule"/>
</dbReference>
<dbReference type="CDD" id="cd02573">
    <property type="entry name" value="PseudoU_synth_EcTruB"/>
    <property type="match status" value="1"/>
</dbReference>
<dbReference type="FunFam" id="3.30.2350.10:FF:000011">
    <property type="entry name" value="tRNA pseudouridine synthase B"/>
    <property type="match status" value="1"/>
</dbReference>
<dbReference type="Gene3D" id="3.30.2350.10">
    <property type="entry name" value="Pseudouridine synthase"/>
    <property type="match status" value="1"/>
</dbReference>
<dbReference type="HAMAP" id="MF_01080">
    <property type="entry name" value="TruB_bact"/>
    <property type="match status" value="1"/>
</dbReference>
<dbReference type="InterPro" id="IPR020103">
    <property type="entry name" value="PsdUridine_synth_cat_dom_sf"/>
</dbReference>
<dbReference type="InterPro" id="IPR002501">
    <property type="entry name" value="PsdUridine_synth_N"/>
</dbReference>
<dbReference type="InterPro" id="IPR014780">
    <property type="entry name" value="tRNA_psdUridine_synth_TruB"/>
</dbReference>
<dbReference type="InterPro" id="IPR032819">
    <property type="entry name" value="TruB_C"/>
</dbReference>
<dbReference type="NCBIfam" id="TIGR00431">
    <property type="entry name" value="TruB"/>
    <property type="match status" value="1"/>
</dbReference>
<dbReference type="PANTHER" id="PTHR13767:SF2">
    <property type="entry name" value="PSEUDOURIDYLATE SYNTHASE TRUB1"/>
    <property type="match status" value="1"/>
</dbReference>
<dbReference type="PANTHER" id="PTHR13767">
    <property type="entry name" value="TRNA-PSEUDOURIDINE SYNTHASE"/>
    <property type="match status" value="1"/>
</dbReference>
<dbReference type="Pfam" id="PF16198">
    <property type="entry name" value="TruB_C_2"/>
    <property type="match status" value="1"/>
</dbReference>
<dbReference type="Pfam" id="PF01509">
    <property type="entry name" value="TruB_N"/>
    <property type="match status" value="1"/>
</dbReference>
<dbReference type="SUPFAM" id="SSF55120">
    <property type="entry name" value="Pseudouridine synthase"/>
    <property type="match status" value="1"/>
</dbReference>
<evidence type="ECO:0000255" key="1">
    <source>
        <dbReference type="HAMAP-Rule" id="MF_01080"/>
    </source>
</evidence>
<protein>
    <recommendedName>
        <fullName evidence="1">tRNA pseudouridine synthase B</fullName>
        <ecNumber evidence="1">5.4.99.25</ecNumber>
    </recommendedName>
    <alternativeName>
        <fullName evidence="1">tRNA pseudouridine(55) synthase</fullName>
        <shortName evidence="1">Psi55 synthase</shortName>
    </alternativeName>
    <alternativeName>
        <fullName evidence="1">tRNA pseudouridylate synthase</fullName>
    </alternativeName>
    <alternativeName>
        <fullName evidence="1">tRNA-uridine isomerase</fullName>
    </alternativeName>
</protein>
<gene>
    <name evidence="1" type="primary">truB</name>
    <name type="ordered locus">stu0995</name>
</gene>
<feature type="chain" id="PRO_0000121922" description="tRNA pseudouridine synthase B">
    <location>
        <begin position="1"/>
        <end position="293"/>
    </location>
</feature>
<feature type="active site" description="Nucleophile" evidence="1">
    <location>
        <position position="39"/>
    </location>
</feature>
<comment type="function">
    <text evidence="1">Responsible for synthesis of pseudouridine from uracil-55 in the psi GC loop of transfer RNAs.</text>
</comment>
<comment type="catalytic activity">
    <reaction evidence="1">
        <text>uridine(55) in tRNA = pseudouridine(55) in tRNA</text>
        <dbReference type="Rhea" id="RHEA:42532"/>
        <dbReference type="Rhea" id="RHEA-COMP:10101"/>
        <dbReference type="Rhea" id="RHEA-COMP:10102"/>
        <dbReference type="ChEBI" id="CHEBI:65314"/>
        <dbReference type="ChEBI" id="CHEBI:65315"/>
        <dbReference type="EC" id="5.4.99.25"/>
    </reaction>
</comment>
<comment type="similarity">
    <text evidence="1">Belongs to the pseudouridine synthase TruB family. Type 1 subfamily.</text>
</comment>
<name>TRUB_STRT2</name>
<accession>Q5M4G2</accession>
<organism>
    <name type="scientific">Streptococcus thermophilus (strain ATCC BAA-250 / LMG 18311)</name>
    <dbReference type="NCBI Taxonomy" id="264199"/>
    <lineage>
        <taxon>Bacteria</taxon>
        <taxon>Bacillati</taxon>
        <taxon>Bacillota</taxon>
        <taxon>Bacilli</taxon>
        <taxon>Lactobacillales</taxon>
        <taxon>Streptococcaceae</taxon>
        <taxon>Streptococcus</taxon>
    </lineage>
</organism>
<keyword id="KW-0413">Isomerase</keyword>
<keyword id="KW-1185">Reference proteome</keyword>
<keyword id="KW-0819">tRNA processing</keyword>